<organism>
    <name type="scientific">Halobacterium salinarum (strain ATCC 29341 / DSM 671 / R1)</name>
    <dbReference type="NCBI Taxonomy" id="478009"/>
    <lineage>
        <taxon>Archaea</taxon>
        <taxon>Methanobacteriati</taxon>
        <taxon>Methanobacteriota</taxon>
        <taxon>Stenosarchaea group</taxon>
        <taxon>Halobacteria</taxon>
        <taxon>Halobacteriales</taxon>
        <taxon>Halobacteriaceae</taxon>
        <taxon>Halobacterium</taxon>
        <taxon>Halobacterium salinarum NRC-34001</taxon>
    </lineage>
</organism>
<evidence type="ECO:0000255" key="1">
    <source>
        <dbReference type="HAMAP-Rule" id="MF_00229"/>
    </source>
</evidence>
<proteinExistence type="inferred from homology"/>
<dbReference type="EC" id="4.3.1.3" evidence="1"/>
<dbReference type="EMBL" id="AM774415">
    <property type="protein sequence ID" value="CAP13859.1"/>
    <property type="molecule type" value="Genomic_DNA"/>
</dbReference>
<dbReference type="RefSeq" id="WP_012289292.1">
    <property type="nucleotide sequence ID" value="NC_010364.1"/>
</dbReference>
<dbReference type="SMR" id="B0R544"/>
<dbReference type="EnsemblBacteria" id="CAP13859">
    <property type="protein sequence ID" value="CAP13859"/>
    <property type="gene ID" value="OE_2739F"/>
</dbReference>
<dbReference type="GeneID" id="68693978"/>
<dbReference type="KEGG" id="hsl:OE_2739F"/>
<dbReference type="HOGENOM" id="CLU_014801_4_0_2"/>
<dbReference type="PhylomeDB" id="B0R544"/>
<dbReference type="UniPathway" id="UPA00379">
    <property type="reaction ID" value="UER00549"/>
</dbReference>
<dbReference type="Proteomes" id="UP000001321">
    <property type="component" value="Chromosome"/>
</dbReference>
<dbReference type="GO" id="GO:0005737">
    <property type="term" value="C:cytoplasm"/>
    <property type="evidence" value="ECO:0007669"/>
    <property type="project" value="UniProtKB-SubCell"/>
</dbReference>
<dbReference type="GO" id="GO:0004397">
    <property type="term" value="F:histidine ammonia-lyase activity"/>
    <property type="evidence" value="ECO:0007669"/>
    <property type="project" value="UniProtKB-UniRule"/>
</dbReference>
<dbReference type="GO" id="GO:0019556">
    <property type="term" value="P:L-histidine catabolic process to glutamate and formamide"/>
    <property type="evidence" value="ECO:0007669"/>
    <property type="project" value="UniProtKB-UniPathway"/>
</dbReference>
<dbReference type="GO" id="GO:0019557">
    <property type="term" value="P:L-histidine catabolic process to glutamate and formate"/>
    <property type="evidence" value="ECO:0007669"/>
    <property type="project" value="UniProtKB-UniPathway"/>
</dbReference>
<dbReference type="CDD" id="cd00332">
    <property type="entry name" value="PAL-HAL"/>
    <property type="match status" value="1"/>
</dbReference>
<dbReference type="FunFam" id="1.10.275.10:FF:000005">
    <property type="entry name" value="Histidine ammonia-lyase"/>
    <property type="match status" value="1"/>
</dbReference>
<dbReference type="Gene3D" id="1.20.200.10">
    <property type="entry name" value="Fumarase/aspartase (Central domain)"/>
    <property type="match status" value="1"/>
</dbReference>
<dbReference type="Gene3D" id="1.10.275.10">
    <property type="entry name" value="Fumarase/aspartase (N-terminal domain)"/>
    <property type="match status" value="1"/>
</dbReference>
<dbReference type="HAMAP" id="MF_00229">
    <property type="entry name" value="His_ammonia_lyase"/>
    <property type="match status" value="1"/>
</dbReference>
<dbReference type="InterPro" id="IPR001106">
    <property type="entry name" value="Aromatic_Lyase"/>
</dbReference>
<dbReference type="InterPro" id="IPR024083">
    <property type="entry name" value="Fumarase/histidase_N"/>
</dbReference>
<dbReference type="InterPro" id="IPR005921">
    <property type="entry name" value="HutH"/>
</dbReference>
<dbReference type="InterPro" id="IPR008948">
    <property type="entry name" value="L-Aspartase-like"/>
</dbReference>
<dbReference type="InterPro" id="IPR022313">
    <property type="entry name" value="Phe/His_NH3-lyase_AS"/>
</dbReference>
<dbReference type="NCBIfam" id="TIGR01225">
    <property type="entry name" value="hutH"/>
    <property type="match status" value="1"/>
</dbReference>
<dbReference type="NCBIfam" id="NF006871">
    <property type="entry name" value="PRK09367.1"/>
    <property type="match status" value="1"/>
</dbReference>
<dbReference type="PANTHER" id="PTHR10362">
    <property type="entry name" value="HISTIDINE AMMONIA-LYASE"/>
    <property type="match status" value="1"/>
</dbReference>
<dbReference type="Pfam" id="PF00221">
    <property type="entry name" value="Lyase_aromatic"/>
    <property type="match status" value="1"/>
</dbReference>
<dbReference type="SUPFAM" id="SSF48557">
    <property type="entry name" value="L-aspartase-like"/>
    <property type="match status" value="1"/>
</dbReference>
<dbReference type="PROSITE" id="PS00488">
    <property type="entry name" value="PAL_HISTIDASE"/>
    <property type="match status" value="1"/>
</dbReference>
<accession>B0R544</accession>
<sequence length="525" mass="54073">MTTEGVVIDGESLTPAAVDAVARHDAPVSIAAGAREAVRESRARIADVLGGDEAVYGVNTGFGSMSDTRIDAADREALQANLVRSHAAGAGSELDTAAVRALLVTRLNALAKGYSGIRERVLDVLVGLLNEGVHPVVPSRGSLGASGDLAPLAHMSRVLIGEGQADVAGERMPAAEALAAADLEPVTLQAKEGLALINGTQLTTGVAALALVDAERVLRSADTAGALTTEVTMSTTASCAPAIHEVRPHDGQAVSARHIRNLTAGSEVLDHHRDCDRVQDAYSIRCLPQVHGAVRDALDHLRAAVATELNSATDNPLVFAGDRVGPRASGTDRAAVVSGGNFHGEVLALRLGYAASALAELAAISERRTDRLLNPETQEPHLEPFLAPDSGLHSGLMIPQYTAASLVNDLRSLGQPTLDNASVSGAQEDHVSMSAGAAYNFREAVEKAATVVGVELLCGAQGREFLDPDLALGAGTAAAYDLVREVSEPVAGDRALADDMAAVGDLVRAGLVEDAVARALDAPLA</sequence>
<name>HUTH_HALS3</name>
<comment type="catalytic activity">
    <reaction evidence="1">
        <text>L-histidine = trans-urocanate + NH4(+)</text>
        <dbReference type="Rhea" id="RHEA:21232"/>
        <dbReference type="ChEBI" id="CHEBI:17771"/>
        <dbReference type="ChEBI" id="CHEBI:28938"/>
        <dbReference type="ChEBI" id="CHEBI:57595"/>
        <dbReference type="EC" id="4.3.1.3"/>
    </reaction>
</comment>
<comment type="pathway">
    <text evidence="1">Amino-acid degradation; L-histidine degradation into L-glutamate; N-formimidoyl-L-glutamate from L-histidine: step 1/3.</text>
</comment>
<comment type="subcellular location">
    <subcellularLocation>
        <location evidence="1">Cytoplasm</location>
    </subcellularLocation>
</comment>
<comment type="PTM">
    <text evidence="1">Contains an active site 4-methylidene-imidazol-5-one (MIO), which is formed autocatalytically by cyclization and dehydration of residues Ala-Ser-Gly.</text>
</comment>
<comment type="similarity">
    <text evidence="1">Belongs to the PAL/histidase family.</text>
</comment>
<feature type="chain" id="PRO_1000100440" description="Probable histidine ammonia-lyase">
    <location>
        <begin position="1"/>
        <end position="525"/>
    </location>
</feature>
<feature type="modified residue" description="2,3-didehydroalanine (Ser)" evidence="1">
    <location>
        <position position="146"/>
    </location>
</feature>
<feature type="cross-link" description="5-imidazolinone (Ala-Gly)" evidence="1">
    <location>
        <begin position="145"/>
        <end position="147"/>
    </location>
</feature>
<keyword id="KW-0963">Cytoplasm</keyword>
<keyword id="KW-0369">Histidine metabolism</keyword>
<keyword id="KW-0456">Lyase</keyword>
<protein>
    <recommendedName>
        <fullName evidence="1">Probable histidine ammonia-lyase</fullName>
        <shortName evidence="1">Histidase</shortName>
        <ecNumber evidence="1">4.3.1.3</ecNumber>
    </recommendedName>
</protein>
<gene>
    <name evidence="1" type="primary">hutH</name>
    <name type="ordered locus">OE_2739F</name>
</gene>
<reference key="1">
    <citation type="journal article" date="2008" name="Genomics">
        <title>Evolution in the laboratory: the genome of Halobacterium salinarum strain R1 compared to that of strain NRC-1.</title>
        <authorList>
            <person name="Pfeiffer F."/>
            <person name="Schuster S.C."/>
            <person name="Broicher A."/>
            <person name="Falb M."/>
            <person name="Palm P."/>
            <person name="Rodewald K."/>
            <person name="Ruepp A."/>
            <person name="Soppa J."/>
            <person name="Tittor J."/>
            <person name="Oesterhelt D."/>
        </authorList>
    </citation>
    <scope>NUCLEOTIDE SEQUENCE [LARGE SCALE GENOMIC DNA]</scope>
    <source>
        <strain>ATCC 29341 / DSM 671 / R1</strain>
    </source>
</reference>